<name>YS74_CAEEL</name>
<gene>
    <name type="ORF">ZK892.4</name>
</gene>
<feature type="chain" id="PRO_0000194729" description="CaiB/baiF CoA-transferase family protein ZK892.4">
    <location>
        <begin position="1"/>
        <end position="340"/>
    </location>
</feature>
<feature type="active site" description="Nucleophile" evidence="1">
    <location>
        <position position="154"/>
    </location>
</feature>
<sequence>MYRFLSGIKVVEIAGLAPVPHCGMMLADFGADVTVIDKKNPAIEQRLNRGKTMKQLDLKNPEDIKKVRDLCQTSDVLLDPYRPGTLEKMGLDPSTLWNNNKGLIICKISGYGQTGRMSQETGHDINYVALSGMLPTFSGVNATRPWPPANMLADFAGGGLSAAFGILSAIYARSHNGGKGCLLDCSMTEGVAYLSSFVQHYYDQPNLFTDKYALFSGECPIYRTYKTKDDKFVAVGAVEPKFYQNLFKLLNVDGRDLFVNPGKITEDLESRFLQKTRDKWANIFKGQECCVTPVLDIHEVGSYGQHVDRNSFTKTSSNWIANPSPRVWTQDELAALSSKK</sequence>
<accession>Q09618</accession>
<reference key="1">
    <citation type="journal article" date="1998" name="Science">
        <title>Genome sequence of the nematode C. elegans: a platform for investigating biology.</title>
        <authorList>
            <consortium name="The C. elegans sequencing consortium"/>
        </authorList>
    </citation>
    <scope>NUCLEOTIDE SEQUENCE [LARGE SCALE GENOMIC DNA]</scope>
    <source>
        <strain>Bristol N2</strain>
    </source>
</reference>
<organism>
    <name type="scientific">Caenorhabditis elegans</name>
    <dbReference type="NCBI Taxonomy" id="6239"/>
    <lineage>
        <taxon>Eukaryota</taxon>
        <taxon>Metazoa</taxon>
        <taxon>Ecdysozoa</taxon>
        <taxon>Nematoda</taxon>
        <taxon>Chromadorea</taxon>
        <taxon>Rhabditida</taxon>
        <taxon>Rhabditina</taxon>
        <taxon>Rhabditomorpha</taxon>
        <taxon>Rhabditoidea</taxon>
        <taxon>Rhabditidae</taxon>
        <taxon>Peloderinae</taxon>
        <taxon>Caenorhabditis</taxon>
    </lineage>
</organism>
<comment type="similarity">
    <text evidence="2">Belongs to the CoA-transferase III family.</text>
</comment>
<keyword id="KW-1185">Reference proteome</keyword>
<keyword id="KW-0808">Transferase</keyword>
<dbReference type="EC" id="2.-.-.-"/>
<dbReference type="EMBL" id="Z48638">
    <property type="protein sequence ID" value="CAA88571.2"/>
    <property type="molecule type" value="Genomic_DNA"/>
</dbReference>
<dbReference type="PIR" id="T28072">
    <property type="entry name" value="T28072"/>
</dbReference>
<dbReference type="RefSeq" id="NP_496163.2">
    <property type="nucleotide sequence ID" value="NM_063762.2"/>
</dbReference>
<dbReference type="SMR" id="Q09618"/>
<dbReference type="FunCoup" id="Q09618">
    <property type="interactions" value="687"/>
</dbReference>
<dbReference type="STRING" id="6239.ZK892.4.1"/>
<dbReference type="PaxDb" id="6239-ZK892.4"/>
<dbReference type="PeptideAtlas" id="Q09618"/>
<dbReference type="EnsemblMetazoa" id="ZK892.4.1">
    <property type="protein sequence ID" value="ZK892.4.1"/>
    <property type="gene ID" value="WBGene00014128"/>
</dbReference>
<dbReference type="GeneID" id="174559"/>
<dbReference type="KEGG" id="cel:CELE_ZK892.4"/>
<dbReference type="UCSC" id="ZK892.4">
    <property type="organism name" value="c. elegans"/>
</dbReference>
<dbReference type="AGR" id="WB:WBGene00014128"/>
<dbReference type="CTD" id="174559"/>
<dbReference type="WormBase" id="ZK892.4">
    <property type="protein sequence ID" value="CE32784"/>
    <property type="gene ID" value="WBGene00014128"/>
</dbReference>
<dbReference type="eggNOG" id="KOG3957">
    <property type="taxonomic scope" value="Eukaryota"/>
</dbReference>
<dbReference type="GeneTree" id="ENSGT00940000157215"/>
<dbReference type="HOGENOM" id="CLU_033975_5_0_1"/>
<dbReference type="InParanoid" id="Q09618"/>
<dbReference type="OMA" id="CPFYGTY"/>
<dbReference type="OrthoDB" id="5863171at2759"/>
<dbReference type="PhylomeDB" id="Q09618"/>
<dbReference type="PRO" id="PR:Q09618"/>
<dbReference type="Proteomes" id="UP000001940">
    <property type="component" value="Chromosome II"/>
</dbReference>
<dbReference type="Bgee" id="WBGene00014128">
    <property type="expression patterns" value="Expressed in material anatomical entity and 2 other cell types or tissues"/>
</dbReference>
<dbReference type="GO" id="GO:0005739">
    <property type="term" value="C:mitochondrion"/>
    <property type="evidence" value="ECO:0000318"/>
    <property type="project" value="GO_Central"/>
</dbReference>
<dbReference type="GO" id="GO:0008111">
    <property type="term" value="F:alpha-methylacyl-CoA racemase activity"/>
    <property type="evidence" value="ECO:0000318"/>
    <property type="project" value="GO_Central"/>
</dbReference>
<dbReference type="GO" id="GO:0016740">
    <property type="term" value="F:transferase activity"/>
    <property type="evidence" value="ECO:0007669"/>
    <property type="project" value="UniProtKB-KW"/>
</dbReference>
<dbReference type="GO" id="GO:0008206">
    <property type="term" value="P:bile acid metabolic process"/>
    <property type="evidence" value="ECO:0000318"/>
    <property type="project" value="GO_Central"/>
</dbReference>
<dbReference type="Gene3D" id="3.40.50.10540">
    <property type="entry name" value="Crotonobetainyl-coa:carnitine coa-transferase, domain 1"/>
    <property type="match status" value="1"/>
</dbReference>
<dbReference type="Gene3D" id="3.30.1540.10">
    <property type="entry name" value="formyl-coa transferase, domain 3"/>
    <property type="match status" value="1"/>
</dbReference>
<dbReference type="InterPro" id="IPR050509">
    <property type="entry name" value="CoA-transferase_III"/>
</dbReference>
<dbReference type="InterPro" id="IPR003673">
    <property type="entry name" value="CoA-Trfase_fam_III"/>
</dbReference>
<dbReference type="InterPro" id="IPR044855">
    <property type="entry name" value="CoA-Trfase_III_dom3_sf"/>
</dbReference>
<dbReference type="InterPro" id="IPR023606">
    <property type="entry name" value="CoA-Trfase_III_dom_1_sf"/>
</dbReference>
<dbReference type="PANTHER" id="PTHR48228:SF5">
    <property type="entry name" value="ALPHA-METHYLACYL-COA RACEMASE"/>
    <property type="match status" value="1"/>
</dbReference>
<dbReference type="PANTHER" id="PTHR48228">
    <property type="entry name" value="SUCCINYL-COA--D-CITRAMALATE COA-TRANSFERASE"/>
    <property type="match status" value="1"/>
</dbReference>
<dbReference type="Pfam" id="PF02515">
    <property type="entry name" value="CoA_transf_3"/>
    <property type="match status" value="1"/>
</dbReference>
<dbReference type="SUPFAM" id="SSF89796">
    <property type="entry name" value="CoA-transferase family III (CaiB/BaiF)"/>
    <property type="match status" value="1"/>
</dbReference>
<evidence type="ECO:0000250" key="1"/>
<evidence type="ECO:0000305" key="2"/>
<protein>
    <recommendedName>
        <fullName>CaiB/baiF CoA-transferase family protein ZK892.4</fullName>
        <ecNumber>2.-.-.-</ecNumber>
    </recommendedName>
</protein>
<proteinExistence type="inferred from homology"/>